<accession>B5R0R9</accession>
<name>PRIB_SALEP</name>
<gene>
    <name evidence="1" type="primary">priB</name>
    <name type="ordered locus">SEN4158</name>
</gene>
<proteinExistence type="inferred from homology"/>
<feature type="chain" id="PRO_1000132628" description="Replication restart protein PriB">
    <location>
        <begin position="1"/>
        <end position="104"/>
    </location>
</feature>
<feature type="domain" description="SSB" evidence="1">
    <location>
        <begin position="1"/>
        <end position="101"/>
    </location>
</feature>
<evidence type="ECO:0000255" key="1">
    <source>
        <dbReference type="HAMAP-Rule" id="MF_00720"/>
    </source>
</evidence>
<reference key="1">
    <citation type="journal article" date="2008" name="Genome Res.">
        <title>Comparative genome analysis of Salmonella enteritidis PT4 and Salmonella gallinarum 287/91 provides insights into evolutionary and host adaptation pathways.</title>
        <authorList>
            <person name="Thomson N.R."/>
            <person name="Clayton D.J."/>
            <person name="Windhorst D."/>
            <person name="Vernikos G."/>
            <person name="Davidson S."/>
            <person name="Churcher C."/>
            <person name="Quail M.A."/>
            <person name="Stevens M."/>
            <person name="Jones M.A."/>
            <person name="Watson M."/>
            <person name="Barron A."/>
            <person name="Layton A."/>
            <person name="Pickard D."/>
            <person name="Kingsley R.A."/>
            <person name="Bignell A."/>
            <person name="Clark L."/>
            <person name="Harris B."/>
            <person name="Ormond D."/>
            <person name="Abdellah Z."/>
            <person name="Brooks K."/>
            <person name="Cherevach I."/>
            <person name="Chillingworth T."/>
            <person name="Woodward J."/>
            <person name="Norberczak H."/>
            <person name="Lord A."/>
            <person name="Arrowsmith C."/>
            <person name="Jagels K."/>
            <person name="Moule S."/>
            <person name="Mungall K."/>
            <person name="Saunders M."/>
            <person name="Whitehead S."/>
            <person name="Chabalgoity J.A."/>
            <person name="Maskell D."/>
            <person name="Humphreys T."/>
            <person name="Roberts M."/>
            <person name="Barrow P.A."/>
            <person name="Dougan G."/>
            <person name="Parkhill J."/>
        </authorList>
    </citation>
    <scope>NUCLEOTIDE SEQUENCE [LARGE SCALE GENOMIC DNA]</scope>
    <source>
        <strain>P125109</strain>
    </source>
</reference>
<comment type="function">
    <text evidence="1">Involved in the restart of stalled replication forks, which reloads the replicative helicase on sites other than the origin of replication; the PriA-PriB pathway is the major replication restart pathway. During primosome assembly it facilitates complex formation between PriA and DnaT on DNA; stabilizes PriA on DNA. Stimulates the DNA unwinding activity of PriA helicase.</text>
</comment>
<comment type="subunit">
    <text evidence="1">Homodimer. Interacts with PriA and DnaT. Component of the replication restart primosome. Primosome assembly occurs via a 'hand-off' mechanism. PriA binds to replication forks, subsequently PriB then DnaT bind; DnaT then displaces ssDNA to generate the helicase loading substrate.</text>
</comment>
<comment type="similarity">
    <text evidence="1">Belongs to the PriB family.</text>
</comment>
<keyword id="KW-0235">DNA replication</keyword>
<keyword id="KW-0238">DNA-binding</keyword>
<keyword id="KW-0639">Primosome</keyword>
<dbReference type="EMBL" id="AM933172">
    <property type="protein sequence ID" value="CAR35718.1"/>
    <property type="molecule type" value="Genomic_DNA"/>
</dbReference>
<dbReference type="RefSeq" id="WP_001519453.1">
    <property type="nucleotide sequence ID" value="NC_011294.1"/>
</dbReference>
<dbReference type="SMR" id="B5R0R9"/>
<dbReference type="GeneID" id="66758616"/>
<dbReference type="KEGG" id="set:SEN4158"/>
<dbReference type="HOGENOM" id="CLU_166075_0_0_6"/>
<dbReference type="Proteomes" id="UP000000613">
    <property type="component" value="Chromosome"/>
</dbReference>
<dbReference type="GO" id="GO:1990077">
    <property type="term" value="C:primosome complex"/>
    <property type="evidence" value="ECO:0007669"/>
    <property type="project" value="UniProtKB-KW"/>
</dbReference>
<dbReference type="GO" id="GO:0003697">
    <property type="term" value="F:single-stranded DNA binding"/>
    <property type="evidence" value="ECO:0007669"/>
    <property type="project" value="UniProtKB-UniRule"/>
</dbReference>
<dbReference type="GO" id="GO:0006269">
    <property type="term" value="P:DNA replication, synthesis of primer"/>
    <property type="evidence" value="ECO:0007669"/>
    <property type="project" value="UniProtKB-KW"/>
</dbReference>
<dbReference type="CDD" id="cd04496">
    <property type="entry name" value="SSB_OBF"/>
    <property type="match status" value="1"/>
</dbReference>
<dbReference type="FunFam" id="2.40.50.140:FF:000077">
    <property type="entry name" value="Primosomal replication protein N"/>
    <property type="match status" value="1"/>
</dbReference>
<dbReference type="Gene3D" id="2.40.50.140">
    <property type="entry name" value="Nucleic acid-binding proteins"/>
    <property type="match status" value="1"/>
</dbReference>
<dbReference type="HAMAP" id="MF_00720">
    <property type="entry name" value="PriB"/>
    <property type="match status" value="1"/>
</dbReference>
<dbReference type="InterPro" id="IPR012340">
    <property type="entry name" value="NA-bd_OB-fold"/>
</dbReference>
<dbReference type="InterPro" id="IPR000424">
    <property type="entry name" value="Primosome_PriB/ssb"/>
</dbReference>
<dbReference type="InterPro" id="IPR023646">
    <property type="entry name" value="Prisomal_replication_PriB"/>
</dbReference>
<dbReference type="NCBIfam" id="TIGR04418">
    <property type="entry name" value="PriB_gamma"/>
    <property type="match status" value="1"/>
</dbReference>
<dbReference type="Pfam" id="PF22657">
    <property type="entry name" value="SSB_1"/>
    <property type="match status" value="1"/>
</dbReference>
<dbReference type="PIRSF" id="PIRSF003135">
    <property type="entry name" value="Primosomal_n"/>
    <property type="match status" value="1"/>
</dbReference>
<dbReference type="SUPFAM" id="SSF50249">
    <property type="entry name" value="Nucleic acid-binding proteins"/>
    <property type="match status" value="1"/>
</dbReference>
<dbReference type="PROSITE" id="PS50935">
    <property type="entry name" value="SSB"/>
    <property type="match status" value="1"/>
</dbReference>
<sequence length="104" mass="11414">MTNRLALSGTVCRAPLRKVSPSGIPHCQFVLEHRSVQEEAGFHRQAWCQMPVIVSGHENQAITHSITVGSRITVQGFISCHKAKNGLSKMVLHAEQIELIDSGD</sequence>
<organism>
    <name type="scientific">Salmonella enteritidis PT4 (strain P125109)</name>
    <dbReference type="NCBI Taxonomy" id="550537"/>
    <lineage>
        <taxon>Bacteria</taxon>
        <taxon>Pseudomonadati</taxon>
        <taxon>Pseudomonadota</taxon>
        <taxon>Gammaproteobacteria</taxon>
        <taxon>Enterobacterales</taxon>
        <taxon>Enterobacteriaceae</taxon>
        <taxon>Salmonella</taxon>
    </lineage>
</organism>
<protein>
    <recommendedName>
        <fullName evidence="1">Replication restart protein PriB</fullName>
    </recommendedName>
</protein>